<reference evidence="13" key="1">
    <citation type="journal article" date="2001" name="DNA Res.">
        <title>Prediction of the coding sequences of unidentified human genes. XXI. The complete sequences of 60 new cDNA clones from brain which code for large proteins.</title>
        <authorList>
            <person name="Nagase T."/>
            <person name="Kikuno R."/>
            <person name="Ohara O."/>
        </authorList>
    </citation>
    <scope>NUCLEOTIDE SEQUENCE [LARGE SCALE MRNA]</scope>
    <source>
        <tissue evidence="13">Brain</tissue>
    </source>
</reference>
<reference evidence="12" key="2">
    <citation type="journal article" date="2003" name="Genome Res.">
        <title>The secreted protein discovery initiative (SPDI), a large-scale effort to identify novel human secreted and transmembrane proteins: a bioinformatics assessment.</title>
        <authorList>
            <person name="Clark H.F."/>
            <person name="Gurney A.L."/>
            <person name="Abaya E."/>
            <person name="Baker K."/>
            <person name="Baldwin D.T."/>
            <person name="Brush J."/>
            <person name="Chen J."/>
            <person name="Chow B."/>
            <person name="Chui C."/>
            <person name="Crowley C."/>
            <person name="Currell B."/>
            <person name="Deuel B."/>
            <person name="Dowd P."/>
            <person name="Eaton D."/>
            <person name="Foster J.S."/>
            <person name="Grimaldi C."/>
            <person name="Gu Q."/>
            <person name="Hass P.E."/>
            <person name="Heldens S."/>
            <person name="Huang A."/>
            <person name="Kim H.S."/>
            <person name="Klimowski L."/>
            <person name="Jin Y."/>
            <person name="Johnson S."/>
            <person name="Lee J."/>
            <person name="Lewis L."/>
            <person name="Liao D."/>
            <person name="Mark M.R."/>
            <person name="Robbie E."/>
            <person name="Sanchez C."/>
            <person name="Schoenfeld J."/>
            <person name="Seshagiri S."/>
            <person name="Simmons L."/>
            <person name="Singh J."/>
            <person name="Smith V."/>
            <person name="Stinson J."/>
            <person name="Vagts A."/>
            <person name="Vandlen R.L."/>
            <person name="Watanabe C."/>
            <person name="Wieand D."/>
            <person name="Woods K."/>
            <person name="Xie M.-H."/>
            <person name="Yansura D.G."/>
            <person name="Yi S."/>
            <person name="Yu G."/>
            <person name="Yuan J."/>
            <person name="Zhang M."/>
            <person name="Zhang Z."/>
            <person name="Goddard A.D."/>
            <person name="Wood W.I."/>
            <person name="Godowski P.J."/>
            <person name="Gray A.M."/>
        </authorList>
    </citation>
    <scope>NUCLEOTIDE SEQUENCE [LARGE SCALE MRNA]</scope>
</reference>
<reference key="3">
    <citation type="journal article" date="2004" name="Nature">
        <title>The DNA sequence and analysis of human chromosome 13.</title>
        <authorList>
            <person name="Dunham A."/>
            <person name="Matthews L.H."/>
            <person name="Burton J."/>
            <person name="Ashurst J.L."/>
            <person name="Howe K.L."/>
            <person name="Ashcroft K.J."/>
            <person name="Beare D.M."/>
            <person name="Burford D.C."/>
            <person name="Hunt S.E."/>
            <person name="Griffiths-Jones S."/>
            <person name="Jones M.C."/>
            <person name="Keenan S.J."/>
            <person name="Oliver K."/>
            <person name="Scott C.E."/>
            <person name="Ainscough R."/>
            <person name="Almeida J.P."/>
            <person name="Ambrose K.D."/>
            <person name="Andrews D.T."/>
            <person name="Ashwell R.I.S."/>
            <person name="Babbage A.K."/>
            <person name="Bagguley C.L."/>
            <person name="Bailey J."/>
            <person name="Bannerjee R."/>
            <person name="Barlow K.F."/>
            <person name="Bates K."/>
            <person name="Beasley H."/>
            <person name="Bird C.P."/>
            <person name="Bray-Allen S."/>
            <person name="Brown A.J."/>
            <person name="Brown J.Y."/>
            <person name="Burrill W."/>
            <person name="Carder C."/>
            <person name="Carter N.P."/>
            <person name="Chapman J.C."/>
            <person name="Clamp M.E."/>
            <person name="Clark S.Y."/>
            <person name="Clarke G."/>
            <person name="Clee C.M."/>
            <person name="Clegg S.C."/>
            <person name="Cobley V."/>
            <person name="Collins J.E."/>
            <person name="Corby N."/>
            <person name="Coville G.J."/>
            <person name="Deloukas P."/>
            <person name="Dhami P."/>
            <person name="Dunham I."/>
            <person name="Dunn M."/>
            <person name="Earthrowl M.E."/>
            <person name="Ellington A.G."/>
            <person name="Faulkner L."/>
            <person name="Frankish A.G."/>
            <person name="Frankland J."/>
            <person name="French L."/>
            <person name="Garner P."/>
            <person name="Garnett J."/>
            <person name="Gilbert J.G.R."/>
            <person name="Gilson C.J."/>
            <person name="Ghori J."/>
            <person name="Grafham D.V."/>
            <person name="Gribble S.M."/>
            <person name="Griffiths C."/>
            <person name="Hall R.E."/>
            <person name="Hammond S."/>
            <person name="Harley J.L."/>
            <person name="Hart E.A."/>
            <person name="Heath P.D."/>
            <person name="Howden P.J."/>
            <person name="Huckle E.J."/>
            <person name="Hunt P.J."/>
            <person name="Hunt A.R."/>
            <person name="Johnson C."/>
            <person name="Johnson D."/>
            <person name="Kay M."/>
            <person name="Kimberley A.M."/>
            <person name="King A."/>
            <person name="Laird G.K."/>
            <person name="Langford C.J."/>
            <person name="Lawlor S."/>
            <person name="Leongamornlert D.A."/>
            <person name="Lloyd D.M."/>
            <person name="Lloyd C."/>
            <person name="Loveland J.E."/>
            <person name="Lovell J."/>
            <person name="Martin S."/>
            <person name="Mashreghi-Mohammadi M."/>
            <person name="McLaren S.J."/>
            <person name="McMurray A."/>
            <person name="Milne S."/>
            <person name="Moore M.J.F."/>
            <person name="Nickerson T."/>
            <person name="Palmer S.A."/>
            <person name="Pearce A.V."/>
            <person name="Peck A.I."/>
            <person name="Pelan S."/>
            <person name="Phillimore B."/>
            <person name="Porter K.M."/>
            <person name="Rice C.M."/>
            <person name="Searle S."/>
            <person name="Sehra H.K."/>
            <person name="Shownkeen R."/>
            <person name="Skuce C.D."/>
            <person name="Smith M."/>
            <person name="Steward C.A."/>
            <person name="Sycamore N."/>
            <person name="Tester J."/>
            <person name="Thomas D.W."/>
            <person name="Tracey A."/>
            <person name="Tromans A."/>
            <person name="Tubby B."/>
            <person name="Wall M."/>
            <person name="Wallis J.M."/>
            <person name="West A.P."/>
            <person name="Whitehead S.L."/>
            <person name="Willey D.L."/>
            <person name="Wilming L."/>
            <person name="Wray P.W."/>
            <person name="Wright M.W."/>
            <person name="Young L."/>
            <person name="Coulson A."/>
            <person name="Durbin R.M."/>
            <person name="Hubbard T."/>
            <person name="Sulston J.E."/>
            <person name="Beck S."/>
            <person name="Bentley D.R."/>
            <person name="Rogers J."/>
            <person name="Ross M.T."/>
        </authorList>
    </citation>
    <scope>NUCLEOTIDE SEQUENCE [LARGE SCALE GENOMIC DNA]</scope>
</reference>
<reference key="4">
    <citation type="journal article" date="2004" name="Genome Res.">
        <title>The status, quality, and expansion of the NIH full-length cDNA project: the Mammalian Gene Collection (MGC).</title>
        <authorList>
            <consortium name="The MGC Project Team"/>
        </authorList>
    </citation>
    <scope>NUCLEOTIDE SEQUENCE [LARGE SCALE MRNA]</scope>
    <scope>VARIANT SER-418</scope>
    <source>
        <tissue>Hippocampus</tissue>
    </source>
</reference>
<reference evidence="12" key="5">
    <citation type="journal article" date="2003" name="Gene">
        <title>Human SLITRK family genes: genomic organization and expression profiling in normal brain and brain tumor tissue.</title>
        <authorList>
            <person name="Aruga J."/>
            <person name="Yokota N."/>
            <person name="Mikoshiba K."/>
        </authorList>
    </citation>
    <scope>IDENTIFICATION</scope>
    <scope>TISSUE SPECIFICITY</scope>
    <source>
        <tissue evidence="4">Brain</tissue>
        <tissue evidence="4">Brain tumor</tissue>
    </source>
</reference>
<reference key="6">
    <citation type="journal article" date="2005" name="Science">
        <title>Sequence variants in SLITRK1 are associated with Tourette's syndrome.</title>
        <authorList>
            <person name="Abelson J.F."/>
            <person name="Kwan K.Y."/>
            <person name="O'Roak B.J."/>
            <person name="Baek D.Y."/>
            <person name="Stillman A.A."/>
            <person name="Morgan T.M."/>
            <person name="Mathews C.A."/>
            <person name="Pauls D.L."/>
            <person name="Rasin M.-R."/>
            <person name="Gunel M."/>
            <person name="Davis N.R."/>
            <person name="Ercan-Sencicek A.G."/>
            <person name="Guez D.H."/>
            <person name="Spertus J.A."/>
            <person name="Leckman J.F."/>
            <person name="Dure L.S. IV"/>
            <person name="Kurlan R."/>
            <person name="Singer H.S."/>
            <person name="Gilbert D.L."/>
            <person name="Farhi A."/>
            <person name="Louvi A."/>
            <person name="Lifton R.P."/>
            <person name="Sestan N."/>
            <person name="State M.W."/>
        </authorList>
    </citation>
    <scope>FUNCTION</scope>
    <scope>DEVELOPMENTAL STAGE</scope>
    <scope>INVOLVEMENT IN TTM</scope>
</reference>
<reference key="7">
    <citation type="journal article" date="2009" name="Biol. Psychiatry">
        <title>SLITRK1 binds 14-3-3 and regulates neurite outgrowth in a phosphorylation-dependent manner.</title>
        <authorList>
            <person name="Kajiwara Y."/>
            <person name="Buxbaum J.D."/>
            <person name="Grice D.E."/>
        </authorList>
    </citation>
    <scope>FUNCTION</scope>
    <scope>SUBCELLULAR LOCATION</scope>
    <scope>PROTEOLYTIC CLEAVAGE</scope>
    <scope>INTERACTION WITH YWHAB; YWHAE; YWHAG; YWHAH; SFN; YWHAQ AND YWHAZ</scope>
    <scope>PHOSPHORYLATION AT SER-695</scope>
    <scope>MUTAGENESIS OF SER-695</scope>
</reference>
<reference key="8">
    <citation type="journal article" date="2016" name="Front. Mol. Neurosci.">
        <title>Slitrk missense mutations associated with neuropsychiatric disorders distinctively impair Slitrk trafficking and synapse formation.</title>
        <authorList>
            <person name="Kang H."/>
            <person name="Han K.A."/>
            <person name="Won S.Y."/>
            <person name="Kim H.M."/>
            <person name="Lee Y.H."/>
            <person name="Ko J."/>
            <person name="Um J.W."/>
        </authorList>
    </citation>
    <scope>FUNCTION</scope>
    <scope>MUTAGENESIS OF VAL-85</scope>
    <scope>CHARACTERIZATION OF VARIANTS ILE-400 AND SER-418</scope>
    <scope>CHARACTERIZATION OF VARIANTS TTM LYS-584 AND GLY-593</scope>
</reference>
<reference key="9">
    <citation type="journal article" date="2016" name="Sci. Rep.">
        <title>Slitrk1 is localized to excitatory synapses and promotes their development.</title>
        <authorList>
            <person name="Beaubien F."/>
            <person name="Raja R."/>
            <person name="Kennedy T.E."/>
            <person name="Fournier A.E."/>
            <person name="Cloutier J.F."/>
        </authorList>
    </citation>
    <scope>FUNCTION</scope>
    <scope>SUBUNIT</scope>
</reference>
<reference key="10">
    <citation type="journal article" date="2006" name="Mol. Psychiatry">
        <title>SLITRK1 mutations in trichotillomania.</title>
        <authorList>
            <person name="Zuchner S."/>
            <person name="Cuccaro M.L."/>
            <person name="Tran-Viet K.N."/>
            <person name="Cope H."/>
            <person name="Krishnan R.R."/>
            <person name="Pericak-Vance M.A."/>
            <person name="Wright H.H."/>
            <person name="Ashley-Koch A."/>
        </authorList>
    </citation>
    <scope>VARIANTS TTM LYS-584 AND GLY-593</scope>
</reference>
<reference key="11">
    <citation type="journal article" date="2013" name="PLoS ONE">
        <title>Characterization of SLITRK1 variation in obsessive-compulsive disorder.</title>
        <authorList>
            <person name="Ozomaro U."/>
            <person name="Cai G."/>
            <person name="Kajiwara Y."/>
            <person name="Yoon S."/>
            <person name="Makarov V."/>
            <person name="Delorme R."/>
            <person name="Betancur C."/>
            <person name="Ruhrmann S."/>
            <person name="Falkai P."/>
            <person name="Grabe H.J."/>
            <person name="Maier W."/>
            <person name="Wagner M."/>
            <person name="Lennertz L."/>
            <person name="Moessner R."/>
            <person name="Murphy D.L."/>
            <person name="Buxbaum J.D."/>
            <person name="Zuechner S."/>
            <person name="Grice D.E."/>
        </authorList>
    </citation>
    <scope>VARIANTS ILE-400 AND SER-418</scope>
</reference>
<gene>
    <name type="primary">SLITRK1</name>
    <name type="synonym">KIAA1910</name>
    <name type="synonym">LRRC12</name>
    <name type="ORF">UNQ233/PRO266</name>
</gene>
<accession>Q96PX8</accession>
<accession>Q5U5I6</accession>
<accession>Q96SF9</accession>
<evidence type="ECO:0000250" key="1">
    <source>
        <dbReference type="UniProtKB" id="Q810C1"/>
    </source>
</evidence>
<evidence type="ECO:0000255" key="2"/>
<evidence type="ECO:0000256" key="3">
    <source>
        <dbReference type="SAM" id="MobiDB-lite"/>
    </source>
</evidence>
<evidence type="ECO:0000269" key="4">
    <source>
    </source>
</evidence>
<evidence type="ECO:0000269" key="5">
    <source>
    </source>
</evidence>
<evidence type="ECO:0000269" key="6">
    <source>
    </source>
</evidence>
<evidence type="ECO:0000269" key="7">
    <source>
    </source>
</evidence>
<evidence type="ECO:0000269" key="8">
    <source>
    </source>
</evidence>
<evidence type="ECO:0000269" key="9">
    <source>
    </source>
</evidence>
<evidence type="ECO:0000269" key="10">
    <source>
    </source>
</evidence>
<evidence type="ECO:0000269" key="11">
    <source>
    </source>
</evidence>
<evidence type="ECO:0000305" key="12"/>
<evidence type="ECO:0000312" key="13">
    <source>
        <dbReference type="EMBL" id="BAB67803.1"/>
    </source>
</evidence>
<evidence type="ECO:0007829" key="14">
    <source>
        <dbReference type="PDB" id="4RCA"/>
    </source>
</evidence>
<evidence type="ECO:0007829" key="15">
    <source>
        <dbReference type="PDB" id="4RCW"/>
    </source>
</evidence>
<protein>
    <recommendedName>
        <fullName>SLIT and NTRK-like protein 1</fullName>
    </recommendedName>
    <alternativeName>
        <fullName>Leucine-rich repeat-containing protein 12</fullName>
    </alternativeName>
</protein>
<name>SLIK1_HUMAN</name>
<dbReference type="EMBL" id="AB067497">
    <property type="protein sequence ID" value="BAB67803.1"/>
    <property type="status" value="ALT_INIT"/>
    <property type="molecule type" value="mRNA"/>
</dbReference>
<dbReference type="EMBL" id="AY358289">
    <property type="protein sequence ID" value="AAQ88656.1"/>
    <property type="molecule type" value="mRNA"/>
</dbReference>
<dbReference type="EMBL" id="AL355481">
    <property type="status" value="NOT_ANNOTATED_CDS"/>
    <property type="molecule type" value="Genomic_DNA"/>
</dbReference>
<dbReference type="EMBL" id="BC051738">
    <property type="protein sequence ID" value="AAH51738.1"/>
    <property type="molecule type" value="mRNA"/>
</dbReference>
<dbReference type="CCDS" id="CCDS9464.1"/>
<dbReference type="RefSeq" id="NP_001268432.1">
    <property type="nucleotide sequence ID" value="NM_001281503.2"/>
</dbReference>
<dbReference type="RefSeq" id="NP_443142.1">
    <property type="nucleotide sequence ID" value="NM_052910.2"/>
</dbReference>
<dbReference type="PDB" id="4RCA">
    <property type="method" value="X-ray"/>
    <property type="resolution" value="2.99 A"/>
    <property type="chains" value="B=20-264"/>
</dbReference>
<dbReference type="PDB" id="4RCW">
    <property type="method" value="X-ray"/>
    <property type="resolution" value="3.19 A"/>
    <property type="chains" value="A/B=341-580"/>
</dbReference>
<dbReference type="PDBsum" id="4RCA"/>
<dbReference type="PDBsum" id="4RCW"/>
<dbReference type="SMR" id="Q96PX8"/>
<dbReference type="BioGRID" id="125359">
    <property type="interactions" value="6"/>
</dbReference>
<dbReference type="FunCoup" id="Q96PX8">
    <property type="interactions" value="264"/>
</dbReference>
<dbReference type="IntAct" id="Q96PX8">
    <property type="interactions" value="3"/>
</dbReference>
<dbReference type="MINT" id="Q96PX8"/>
<dbReference type="STRING" id="9606.ENSP00000366288"/>
<dbReference type="GlyGen" id="Q96PX8">
    <property type="glycosylation" value="3 sites, 1 O-linked glycan (1 site)"/>
</dbReference>
<dbReference type="iPTMnet" id="Q96PX8"/>
<dbReference type="PhosphoSitePlus" id="Q96PX8"/>
<dbReference type="BioMuta" id="SLITRK1"/>
<dbReference type="DMDM" id="46396997"/>
<dbReference type="MassIVE" id="Q96PX8"/>
<dbReference type="PaxDb" id="9606-ENSP00000366288"/>
<dbReference type="PeptideAtlas" id="Q96PX8"/>
<dbReference type="ProteomicsDB" id="77783"/>
<dbReference type="Antibodypedia" id="2648">
    <property type="antibodies" value="263 antibodies from 30 providers"/>
</dbReference>
<dbReference type="DNASU" id="114798"/>
<dbReference type="Ensembl" id="ENST00000377084.3">
    <property type="protein sequence ID" value="ENSP00000366288.2"/>
    <property type="gene ID" value="ENSG00000178235.8"/>
</dbReference>
<dbReference type="Ensembl" id="ENST00000674365.1">
    <property type="protein sequence ID" value="ENSP00000501349.1"/>
    <property type="gene ID" value="ENSG00000178235.8"/>
</dbReference>
<dbReference type="GeneID" id="114798"/>
<dbReference type="KEGG" id="hsa:114798"/>
<dbReference type="MANE-Select" id="ENST00000674365.1">
    <property type="protein sequence ID" value="ENSP00000501349.1"/>
    <property type="RefSeq nucleotide sequence ID" value="NM_001281503.2"/>
    <property type="RefSeq protein sequence ID" value="NP_001268432.1"/>
</dbReference>
<dbReference type="UCSC" id="uc001vlk.4">
    <property type="organism name" value="human"/>
</dbReference>
<dbReference type="AGR" id="HGNC:20297"/>
<dbReference type="CTD" id="114798"/>
<dbReference type="DisGeNET" id="114798"/>
<dbReference type="GeneCards" id="SLITRK1"/>
<dbReference type="HGNC" id="HGNC:20297">
    <property type="gene designation" value="SLITRK1"/>
</dbReference>
<dbReference type="HPA" id="ENSG00000178235">
    <property type="expression patterns" value="Tissue enriched (brain)"/>
</dbReference>
<dbReference type="MalaCards" id="SLITRK1"/>
<dbReference type="MIM" id="609678">
    <property type="type" value="gene"/>
</dbReference>
<dbReference type="MIM" id="613229">
    <property type="type" value="phenotype"/>
</dbReference>
<dbReference type="neXtProt" id="NX_Q96PX8"/>
<dbReference type="OpenTargets" id="ENSG00000178235"/>
<dbReference type="PharmGKB" id="PA134944423"/>
<dbReference type="VEuPathDB" id="HostDB:ENSG00000178235"/>
<dbReference type="eggNOG" id="ENOG502QTHH">
    <property type="taxonomic scope" value="Eukaryota"/>
</dbReference>
<dbReference type="GeneTree" id="ENSGT00940000159810"/>
<dbReference type="HOGENOM" id="CLU_012706_2_0_1"/>
<dbReference type="InParanoid" id="Q96PX8"/>
<dbReference type="OMA" id="KICACNE"/>
<dbReference type="OrthoDB" id="1394818at2759"/>
<dbReference type="PAN-GO" id="Q96PX8">
    <property type="GO annotations" value="5 GO annotations based on evolutionary models"/>
</dbReference>
<dbReference type="PhylomeDB" id="Q96PX8"/>
<dbReference type="TreeFam" id="TF351826"/>
<dbReference type="PathwayCommons" id="Q96PX8"/>
<dbReference type="Reactome" id="R-HSA-388844">
    <property type="pathway name" value="Receptor-type tyrosine-protein phosphatases"/>
</dbReference>
<dbReference type="SignaLink" id="Q96PX8"/>
<dbReference type="SIGNOR" id="Q96PX8"/>
<dbReference type="BioGRID-ORCS" id="114798">
    <property type="hits" value="9 hits in 1135 CRISPR screens"/>
</dbReference>
<dbReference type="EvolutionaryTrace" id="Q96PX8"/>
<dbReference type="GeneWiki" id="SLITRK1_(gene)"/>
<dbReference type="GenomeRNAi" id="114798"/>
<dbReference type="Pharos" id="Q96PX8">
    <property type="development level" value="Tbio"/>
</dbReference>
<dbReference type="PRO" id="PR:Q96PX8"/>
<dbReference type="Proteomes" id="UP000005640">
    <property type="component" value="Chromosome 13"/>
</dbReference>
<dbReference type="RNAct" id="Q96PX8">
    <property type="molecule type" value="protein"/>
</dbReference>
<dbReference type="Bgee" id="ENSG00000178235">
    <property type="expression patterns" value="Expressed in Brodmann (1909) area 46 and 61 other cell types or tissues"/>
</dbReference>
<dbReference type="GO" id="GO:0005576">
    <property type="term" value="C:extracellular region"/>
    <property type="evidence" value="ECO:0007669"/>
    <property type="project" value="UniProtKB-SubCell"/>
</dbReference>
<dbReference type="GO" id="GO:0098982">
    <property type="term" value="C:GABA-ergic synapse"/>
    <property type="evidence" value="ECO:0000314"/>
    <property type="project" value="SynGO"/>
</dbReference>
<dbReference type="GO" id="GO:0098978">
    <property type="term" value="C:glutamatergic synapse"/>
    <property type="evidence" value="ECO:0000314"/>
    <property type="project" value="SynGO"/>
</dbReference>
<dbReference type="GO" id="GO:0005886">
    <property type="term" value="C:plasma membrane"/>
    <property type="evidence" value="ECO:0000304"/>
    <property type="project" value="Reactome"/>
</dbReference>
<dbReference type="GO" id="GO:0098839">
    <property type="term" value="C:postsynaptic density membrane"/>
    <property type="evidence" value="ECO:0000318"/>
    <property type="project" value="GO_Central"/>
</dbReference>
<dbReference type="GO" id="GO:0045202">
    <property type="term" value="C:synapse"/>
    <property type="evidence" value="ECO:0000250"/>
    <property type="project" value="UniProtKB"/>
</dbReference>
<dbReference type="GO" id="GO:0030534">
    <property type="term" value="P:adult behavior"/>
    <property type="evidence" value="ECO:0007669"/>
    <property type="project" value="Ensembl"/>
</dbReference>
<dbReference type="GO" id="GO:0007409">
    <property type="term" value="P:axonogenesis"/>
    <property type="evidence" value="ECO:0000318"/>
    <property type="project" value="GO_Central"/>
</dbReference>
<dbReference type="GO" id="GO:0006897">
    <property type="term" value="P:endocytosis"/>
    <property type="evidence" value="ECO:0007669"/>
    <property type="project" value="Ensembl"/>
</dbReference>
<dbReference type="GO" id="GO:0010467">
    <property type="term" value="P:gene expression"/>
    <property type="evidence" value="ECO:0007669"/>
    <property type="project" value="Ensembl"/>
</dbReference>
<dbReference type="GO" id="GO:0042592">
    <property type="term" value="P:homeostatic process"/>
    <property type="evidence" value="ECO:0007669"/>
    <property type="project" value="Ensembl"/>
</dbReference>
<dbReference type="GO" id="GO:0035264">
    <property type="term" value="P:multicellular organism growth"/>
    <property type="evidence" value="ECO:0007669"/>
    <property type="project" value="Ensembl"/>
</dbReference>
<dbReference type="GO" id="GO:1990138">
    <property type="term" value="P:neuron projection extension"/>
    <property type="evidence" value="ECO:0007669"/>
    <property type="project" value="Ensembl"/>
</dbReference>
<dbReference type="GO" id="GO:0042415">
    <property type="term" value="P:norepinephrine metabolic process"/>
    <property type="evidence" value="ECO:0007669"/>
    <property type="project" value="Ensembl"/>
</dbReference>
<dbReference type="GO" id="GO:0050772">
    <property type="term" value="P:positive regulation of axonogenesis"/>
    <property type="evidence" value="ECO:0000315"/>
    <property type="project" value="UniProtKB"/>
</dbReference>
<dbReference type="GO" id="GO:0051965">
    <property type="term" value="P:positive regulation of synapse assembly"/>
    <property type="evidence" value="ECO:0000318"/>
    <property type="project" value="GO_Central"/>
</dbReference>
<dbReference type="GO" id="GO:1905606">
    <property type="term" value="P:regulation of presynapse assembly"/>
    <property type="evidence" value="ECO:0000314"/>
    <property type="project" value="SynGO"/>
</dbReference>
<dbReference type="GO" id="GO:0007416">
    <property type="term" value="P:synapse assembly"/>
    <property type="evidence" value="ECO:0000315"/>
    <property type="project" value="UniProtKB"/>
</dbReference>
<dbReference type="GO" id="GO:0099560">
    <property type="term" value="P:synaptic membrane adhesion"/>
    <property type="evidence" value="ECO:0000314"/>
    <property type="project" value="SynGO"/>
</dbReference>
<dbReference type="GO" id="GO:0071625">
    <property type="term" value="P:vocalization behavior"/>
    <property type="evidence" value="ECO:0007669"/>
    <property type="project" value="Ensembl"/>
</dbReference>
<dbReference type="FunFam" id="3.80.10.10:FF:000001">
    <property type="entry name" value="SLIT and NTRK-like family, member 1"/>
    <property type="match status" value="2"/>
</dbReference>
<dbReference type="Gene3D" id="3.80.10.10">
    <property type="entry name" value="Ribonuclease Inhibitor"/>
    <property type="match status" value="2"/>
</dbReference>
<dbReference type="InterPro" id="IPR000483">
    <property type="entry name" value="Cys-rich_flank_reg_C"/>
</dbReference>
<dbReference type="InterPro" id="IPR001611">
    <property type="entry name" value="Leu-rich_rpt"/>
</dbReference>
<dbReference type="InterPro" id="IPR003591">
    <property type="entry name" value="Leu-rich_rpt_typical-subtyp"/>
</dbReference>
<dbReference type="InterPro" id="IPR032675">
    <property type="entry name" value="LRR_dom_sf"/>
</dbReference>
<dbReference type="PANTHER" id="PTHR45773:SF7">
    <property type="entry name" value="SLIT AND NTRK-LIKE PROTEIN 1"/>
    <property type="match status" value="1"/>
</dbReference>
<dbReference type="PANTHER" id="PTHR45773">
    <property type="entry name" value="SLIT AND NTRK-LIKE PROTEIN 4-RELATED"/>
    <property type="match status" value="1"/>
</dbReference>
<dbReference type="Pfam" id="PF13855">
    <property type="entry name" value="LRR_8"/>
    <property type="match status" value="2"/>
</dbReference>
<dbReference type="SMART" id="SM00369">
    <property type="entry name" value="LRR_TYP"/>
    <property type="match status" value="11"/>
</dbReference>
<dbReference type="SMART" id="SM00082">
    <property type="entry name" value="LRRCT"/>
    <property type="match status" value="2"/>
</dbReference>
<dbReference type="SUPFAM" id="SSF52058">
    <property type="entry name" value="L domain-like"/>
    <property type="match status" value="2"/>
</dbReference>
<dbReference type="PROSITE" id="PS51450">
    <property type="entry name" value="LRR"/>
    <property type="match status" value="12"/>
</dbReference>
<organism evidence="13">
    <name type="scientific">Homo sapiens</name>
    <name type="common">Human</name>
    <dbReference type="NCBI Taxonomy" id="9606"/>
    <lineage>
        <taxon>Eukaryota</taxon>
        <taxon>Metazoa</taxon>
        <taxon>Chordata</taxon>
        <taxon>Craniata</taxon>
        <taxon>Vertebrata</taxon>
        <taxon>Euteleostomi</taxon>
        <taxon>Mammalia</taxon>
        <taxon>Eutheria</taxon>
        <taxon>Euarchontoglires</taxon>
        <taxon>Primates</taxon>
        <taxon>Haplorrhini</taxon>
        <taxon>Catarrhini</taxon>
        <taxon>Hominidae</taxon>
        <taxon>Homo</taxon>
    </lineage>
</organism>
<keyword id="KW-0002">3D-structure</keyword>
<keyword id="KW-0325">Glycoprotein</keyword>
<keyword id="KW-0433">Leucine-rich repeat</keyword>
<keyword id="KW-0472">Membrane</keyword>
<keyword id="KW-0597">Phosphoprotein</keyword>
<keyword id="KW-1267">Proteomics identification</keyword>
<keyword id="KW-1185">Reference proteome</keyword>
<keyword id="KW-0677">Repeat</keyword>
<keyword id="KW-0964">Secreted</keyword>
<keyword id="KW-0732">Signal</keyword>
<keyword id="KW-0770">Synapse</keyword>
<keyword id="KW-0812">Transmembrane</keyword>
<keyword id="KW-1133">Transmembrane helix</keyword>
<feature type="signal peptide" evidence="2">
    <location>
        <begin position="1"/>
        <end position="17"/>
    </location>
</feature>
<feature type="chain" id="PRO_0000032673" description="SLIT and NTRK-like protein 1" evidence="2">
    <location>
        <begin position="18"/>
        <end position="696"/>
    </location>
</feature>
<feature type="topological domain" description="Extracellular" evidence="2">
    <location>
        <begin position="18"/>
        <end position="622"/>
    </location>
</feature>
<feature type="transmembrane region" description="Helical" evidence="2">
    <location>
        <begin position="623"/>
        <end position="643"/>
    </location>
</feature>
<feature type="topological domain" description="Cytoplasmic" evidence="2">
    <location>
        <begin position="644"/>
        <end position="696"/>
    </location>
</feature>
<feature type="domain" description="LRRNT 1">
    <location>
        <begin position="18"/>
        <end position="57"/>
    </location>
</feature>
<feature type="repeat" description="LRR 1">
    <location>
        <begin position="59"/>
        <end position="80"/>
    </location>
</feature>
<feature type="repeat" description="LRR 2">
    <location>
        <begin position="83"/>
        <end position="104"/>
    </location>
</feature>
<feature type="repeat" description="LRR 3">
    <location>
        <begin position="106"/>
        <end position="128"/>
    </location>
</feature>
<feature type="repeat" description="LRR 4">
    <location>
        <begin position="131"/>
        <end position="152"/>
    </location>
</feature>
<feature type="repeat" description="LRR 5">
    <location>
        <begin position="155"/>
        <end position="176"/>
    </location>
</feature>
<feature type="repeat" description="LRR 6">
    <location>
        <begin position="178"/>
        <end position="199"/>
    </location>
</feature>
<feature type="domain" description="LRRCT 1">
    <location>
        <begin position="212"/>
        <end position="263"/>
    </location>
</feature>
<feature type="domain" description="LRRNT 2">
    <location>
        <begin position="332"/>
        <end position="373"/>
    </location>
</feature>
<feature type="repeat" description="LRR 7">
    <location>
        <begin position="376"/>
        <end position="397"/>
    </location>
</feature>
<feature type="repeat" description="LRR 8">
    <location>
        <begin position="400"/>
        <end position="421"/>
    </location>
</feature>
<feature type="repeat" description="LRR 9">
    <location>
        <begin position="424"/>
        <end position="445"/>
    </location>
</feature>
<feature type="repeat" description="LRR 10">
    <location>
        <begin position="448"/>
        <end position="469"/>
    </location>
</feature>
<feature type="repeat" description="LRR 11">
    <location>
        <begin position="472"/>
        <end position="493"/>
    </location>
</feature>
<feature type="repeat" description="LRR 12">
    <location>
        <begin position="495"/>
        <end position="516"/>
    </location>
</feature>
<feature type="domain" description="LRRCT 2">
    <location>
        <begin position="529"/>
        <end position="580"/>
    </location>
</feature>
<feature type="region of interest" description="Disordered" evidence="3">
    <location>
        <begin position="265"/>
        <end position="314"/>
    </location>
</feature>
<feature type="modified residue" description="Phosphoserine; by CK2" evidence="8">
    <location>
        <position position="695"/>
    </location>
</feature>
<feature type="sequence variant" id="VAR_077626" description="Found in a patient with obsessive-compulsive disorder; likely pathogenic; decreased levels of mature protein; decreased localization to the cell membrane surface expression; decreased function in synaptogenesis." evidence="9 11">
    <original>N</original>
    <variation>I</variation>
    <location>
        <position position="400"/>
    </location>
</feature>
<feature type="sequence variant" id="VAR_077627" description="Found in a patient with obsessive-compulsive disorder; likely pathogenic; decreased levels of mature protein; decreased localization to the cell membrane surface expression; decreased function in synaptogenesis; dbSNP:rs150504822." evidence="5 9 11">
    <original>T</original>
    <variation>S</variation>
    <location>
        <position position="418"/>
    </location>
</feature>
<feature type="sequence variant" id="VAR_027755" description="In dbSNP:rs7491932.">
    <original>L</original>
    <variation>M</variation>
    <location>
        <position position="552"/>
    </location>
</feature>
<feature type="sequence variant" id="VAR_077628" description="In TTM; uncertain significance; does not affect synaptogenesis; dbSNP:rs1035448844." evidence="7 11">
    <original>R</original>
    <variation>K</variation>
    <location>
        <position position="584"/>
    </location>
</feature>
<feature type="sequence variant" id="VAR_077629" description="In TTM; uncertain significance; does not affect synaptogenesis; dbSNP:rs1368546312." evidence="7 11">
    <original>S</original>
    <variation>G</variation>
    <location>
        <position position="593"/>
    </location>
</feature>
<feature type="mutagenesis site" description="Does not affect surface expression." evidence="11">
    <original>V</original>
    <variation>M</variation>
    <location>
        <position position="85"/>
    </location>
</feature>
<feature type="mutagenesis site" description="Loss of phosphorylation. Not able to promote neurite outgrowth." evidence="8">
    <original>S</original>
    <variation>A</variation>
    <location>
        <position position="695"/>
    </location>
</feature>
<feature type="mutagenesis site" description="Able to promote neurite outgrowth as the wild-type." evidence="8">
    <original>S</original>
    <variation>E</variation>
    <location>
        <position position="695"/>
    </location>
</feature>
<feature type="turn" evidence="14">
    <location>
        <begin position="23"/>
        <end position="26"/>
    </location>
</feature>
<feature type="strand" evidence="14">
    <location>
        <begin position="28"/>
        <end position="30"/>
    </location>
</feature>
<feature type="strand" evidence="14">
    <location>
        <begin position="35"/>
        <end position="41"/>
    </location>
</feature>
<feature type="strand" evidence="14">
    <location>
        <begin position="50"/>
        <end position="52"/>
    </location>
</feature>
<feature type="strand" evidence="14">
    <location>
        <begin position="61"/>
        <end position="64"/>
    </location>
</feature>
<feature type="turn" evidence="14">
    <location>
        <begin position="75"/>
        <end position="78"/>
    </location>
</feature>
<feature type="helix" evidence="14">
    <location>
        <begin position="79"/>
        <end position="81"/>
    </location>
</feature>
<feature type="strand" evidence="14">
    <location>
        <begin position="84"/>
        <end position="88"/>
    </location>
</feature>
<feature type="turn" evidence="14">
    <location>
        <begin position="99"/>
        <end position="104"/>
    </location>
</feature>
<feature type="strand" evidence="14">
    <location>
        <begin position="110"/>
        <end position="112"/>
    </location>
</feature>
<feature type="turn" evidence="14">
    <location>
        <begin position="123"/>
        <end position="128"/>
    </location>
</feature>
<feature type="strand" evidence="14">
    <location>
        <begin position="134"/>
        <end position="136"/>
    </location>
</feature>
<feature type="helix" evidence="14">
    <location>
        <begin position="147"/>
        <end position="149"/>
    </location>
</feature>
<feature type="strand" evidence="14">
    <location>
        <begin position="158"/>
        <end position="160"/>
    </location>
</feature>
<feature type="turn" evidence="14">
    <location>
        <begin position="171"/>
        <end position="176"/>
    </location>
</feature>
<feature type="strand" evidence="14">
    <location>
        <begin position="181"/>
        <end position="183"/>
    </location>
</feature>
<feature type="helix" evidence="14">
    <location>
        <begin position="194"/>
        <end position="198"/>
    </location>
</feature>
<feature type="strand" evidence="14">
    <location>
        <begin position="205"/>
        <end position="208"/>
    </location>
</feature>
<feature type="turn" evidence="14">
    <location>
        <begin position="218"/>
        <end position="220"/>
    </location>
</feature>
<feature type="helix" evidence="14">
    <location>
        <begin position="221"/>
        <end position="229"/>
    </location>
</feature>
<feature type="strand" evidence="14">
    <location>
        <begin position="240"/>
        <end position="243"/>
    </location>
</feature>
<feature type="turn" evidence="14">
    <location>
        <begin position="245"/>
        <end position="249"/>
    </location>
</feature>
<feature type="helix" evidence="14">
    <location>
        <begin position="252"/>
        <end position="254"/>
    </location>
</feature>
<feature type="helix" evidence="14">
    <location>
        <begin position="257"/>
        <end position="260"/>
    </location>
</feature>
<feature type="strand" evidence="15">
    <location>
        <begin position="344"/>
        <end position="349"/>
    </location>
</feature>
<feature type="strand" evidence="15">
    <location>
        <begin position="355"/>
        <end position="358"/>
    </location>
</feature>
<feature type="strand" evidence="15">
    <location>
        <begin position="377"/>
        <end position="381"/>
    </location>
</feature>
<feature type="helix" evidence="15">
    <location>
        <begin position="392"/>
        <end position="395"/>
    </location>
</feature>
<feature type="strand" evidence="15">
    <location>
        <begin position="402"/>
        <end position="405"/>
    </location>
</feature>
<feature type="turn" evidence="15">
    <location>
        <begin position="416"/>
        <end position="421"/>
    </location>
</feature>
<feature type="strand" evidence="15">
    <location>
        <begin position="427"/>
        <end position="429"/>
    </location>
</feature>
<feature type="helix" evidence="15">
    <location>
        <begin position="441"/>
        <end position="443"/>
    </location>
</feature>
<feature type="strand" evidence="15">
    <location>
        <begin position="451"/>
        <end position="453"/>
    </location>
</feature>
<feature type="helix" evidence="15">
    <location>
        <begin position="466"/>
        <end position="468"/>
    </location>
</feature>
<feature type="strand" evidence="15">
    <location>
        <begin position="475"/>
        <end position="477"/>
    </location>
</feature>
<feature type="strand" evidence="15">
    <location>
        <begin position="490"/>
        <end position="493"/>
    </location>
</feature>
<feature type="strand" evidence="15">
    <location>
        <begin position="497"/>
        <end position="500"/>
    </location>
</feature>
<feature type="helix" evidence="15">
    <location>
        <begin position="511"/>
        <end position="515"/>
    </location>
</feature>
<feature type="strand" evidence="15">
    <location>
        <begin position="523"/>
        <end position="525"/>
    </location>
</feature>
<feature type="turn" evidence="15">
    <location>
        <begin position="535"/>
        <end position="537"/>
    </location>
</feature>
<feature type="helix" evidence="15">
    <location>
        <begin position="538"/>
        <end position="545"/>
    </location>
</feature>
<feature type="strand" evidence="15">
    <location>
        <begin position="549"/>
        <end position="552"/>
    </location>
</feature>
<feature type="strand" evidence="15">
    <location>
        <begin position="557"/>
        <end position="561"/>
    </location>
</feature>
<feature type="helix" evidence="15">
    <location>
        <begin position="562"/>
        <end position="564"/>
    </location>
</feature>
<feature type="turn" evidence="15">
    <location>
        <begin position="569"/>
        <end position="571"/>
    </location>
</feature>
<feature type="helix" evidence="15">
    <location>
        <begin position="574"/>
        <end position="577"/>
    </location>
</feature>
<proteinExistence type="evidence at protein level"/>
<comment type="function">
    <text evidence="6 8 10 11">It is involved in synaptogenesis and promotes excitatory synapse differentiation (PubMed:27273464, PubMed:27812321). Enhances neuronal dendrite outgrowth (PubMed:16224024, PubMed:19640509).</text>
</comment>
<comment type="subunit">
    <text evidence="8 10">Can form homodimers; homodimerization requires repeat LRR 2 (PubMed:27273464). Interacts with YWHAB, YWHAE, YWHAG, YWHAH, SFN, YWHAQ and YWHAZ (PubMed:19640509).</text>
</comment>
<comment type="interaction">
    <interactant intactId="EBI-7137880">
        <id>Q96PX8</id>
    </interactant>
    <interactant intactId="EBI-947187">
        <id>Q9UHD9</id>
        <label>UBQLN2</label>
    </interactant>
    <organismsDiffer>false</organismsDiffer>
    <experiments>3</experiments>
</comment>
<comment type="subcellular location">
    <subcellularLocation>
        <location evidence="12">Membrane</location>
        <topology evidence="12">Single-pass type I membrane protein</topology>
    </subcellularLocation>
    <subcellularLocation>
        <location evidence="8">Secreted</location>
    </subcellularLocation>
    <subcellularLocation>
        <location evidence="1">Synapse</location>
    </subcellularLocation>
</comment>
<comment type="tissue specificity">
    <text evidence="4">Expressed predominantly in the frontal lobe of the cerebral cortex of the brain. Also expressed in some astrocytic brain tumors such as astrocytomas, oligodendrogliomas, glioblastomas, gangliogliomas and primitive neuroectodermal tumors.</text>
</comment>
<comment type="developmental stage">
    <text evidence="6">At 20 weeks of gestation, expressed in multiple brain regions, including the developing neo-cortical plate, subplate zone, striatum, globus pallidus, thalamus and subthalamus.</text>
</comment>
<comment type="PTM">
    <text evidence="8">Undergoes proteolytic cleavage that results in shedding of the ectodomain and cleavage of the C-terminal cytoplasmic tail. Glycosylated. Phosphorylation at Ser-695 is necessary for proper function in promoting neurite outgrowth.</text>
</comment>
<comment type="disease" evidence="6 7 11">
    <disease id="DI-02830">
        <name>Trichotillomania</name>
        <acronym>TTM</acronym>
        <description>A neuropsychiatric disorder characterized by chronic, repetitive, or compulsive hair pulling resulting in noticeable hair loss. Affected individuals may develop physical complications and often have overlapping psychological disorders, such as Gilles de la Tourette syndrome or obsessive-compulsive disorder.</description>
        <dbReference type="MIM" id="613229"/>
    </disease>
    <text>The disease may be caused by variants affecting the gene represented in this entry.</text>
</comment>
<comment type="similarity">
    <text evidence="12">Belongs to the SLITRK family.</text>
</comment>
<comment type="sequence caution" evidence="12">
    <conflict type="erroneous initiation">
        <sequence resource="EMBL-CDS" id="BAB67803"/>
    </conflict>
</comment>
<comment type="online information" name="Protein Spotlight">
    <link uri="https://www.proteinspotlight.org/back_issues/187/"/>
    <text>Out of the ordinary - Issue 187 of January 2017</text>
</comment>
<sequence>MLLWILLLETSLCFAAGNVTGDVCKEKICSCNEIEGDLHVDCEKKGFTSLQRFTAPTSQFYHLFLHGNSLTRLFPNEFANFYNAVSLHMENNGLHEIVPGAFLGLQLVKRLHINNNKIKSFRKQTFLGLDDLEYLQADFNLLRDIDPGAFQDLNKLEVLILNDNLISTLPANVFQYVPITHLDLRGNRLKTLPYEEVLEQIPGIAEILLEDNPWDCTCDLLSLKEWLENIPKNALIGRVVCEAPTRLQGKDLNETTEQDLCPLKNRVDSSLPAPPAQEETFAPGPLPTPFKTNGQEDHATPGSAPNGGTKIPGNWQIKIRPTAAIATGSSRNKPLANSLPCPGGCSCDHIPGSGLKMNCNNRNVSSLADLKPKLSNVQELFLRDNKIHSIRKSHFVDYKNLILLDLGNNNIATVENNTFKNLLDLRWLYMDSNYLDTLSREKFAGLQNLEYLNVEYNAIQLILPGTFNAMPKLRILILNNNLLRSLPVDVFAGVSLSKLSLHNNYFMYLPVAGVLDQLTSIIQIDLHGNPWECSCTIVPFKQWAERLGSEVLMSDLKCETPVNFFRKDFMLLSNDEICPQLYARISPTLTSHSKNSTGLAETGTHSNSYLDTSRVSISVLVPGLLLVFVTSAFTVVGMLVFILRNRKRSKRRDANSSASEINSLQTVCDSSYWHNGPYNADGAHRVYDCGSHSLSD</sequence>